<accession>Q57748</accession>
<organism>
    <name type="scientific">Methanocaldococcus jannaschii (strain ATCC 43067 / DSM 2661 / JAL-1 / JCM 10045 / NBRC 100440)</name>
    <name type="common">Methanococcus jannaschii</name>
    <dbReference type="NCBI Taxonomy" id="243232"/>
    <lineage>
        <taxon>Archaea</taxon>
        <taxon>Methanobacteriati</taxon>
        <taxon>Methanobacteriota</taxon>
        <taxon>Methanomada group</taxon>
        <taxon>Methanococci</taxon>
        <taxon>Methanococcales</taxon>
        <taxon>Methanocaldococcaceae</taxon>
        <taxon>Methanocaldococcus</taxon>
    </lineage>
</organism>
<comment type="similarity">
    <text evidence="2">Belongs to the LysR transcriptional regulatory family.</text>
</comment>
<protein>
    <recommendedName>
        <fullName>Uncharacterized HTH-type transcriptional regulator MJ0300</fullName>
    </recommendedName>
</protein>
<feature type="chain" id="PRO_0000105831" description="Uncharacterized HTH-type transcriptional regulator MJ0300">
    <location>
        <begin position="1"/>
        <end position="296"/>
    </location>
</feature>
<feature type="domain" description="HTH lysR-type" evidence="1">
    <location>
        <begin position="1"/>
        <end position="60"/>
    </location>
</feature>
<feature type="DNA-binding region" description="H-T-H motif" evidence="1">
    <location>
        <begin position="20"/>
        <end position="39"/>
    </location>
</feature>
<gene>
    <name type="ordered locus">MJ0300</name>
</gene>
<name>Y300_METJA</name>
<proteinExistence type="inferred from homology"/>
<sequence>MDPKISYFQTFIVASKTKSFSKAAKRLGITQGTVSNHISALEKYFDAQLFLRTPEGVDLTPEGKIFYERAEKILDLLNEAKLLMRAIHENPEGIIRIYASTTPGEHILPSIIKEYKSSYKNVDFEITITDSERCFKALDEGLADIAAVGYLKNKNYEYTIIGKDRLVLIVPPNHPLAEKGTAKLEDILKEDYIDREEGSGTREAFIKALNDKGYSIMDLNVVMRLGSHSAVITAVSEGYGVSVVSEIPAKKAEDAGLIKIVPVVDLDVVRYLYLVKSRRPKNPSAVKSFWEFVTKV</sequence>
<dbReference type="EMBL" id="L77117">
    <property type="protein sequence ID" value="AAB98287.1"/>
    <property type="molecule type" value="Genomic_DNA"/>
</dbReference>
<dbReference type="PIR" id="E64337">
    <property type="entry name" value="E64337"/>
</dbReference>
<dbReference type="RefSeq" id="WP_010869798.1">
    <property type="nucleotide sequence ID" value="NC_000909.1"/>
</dbReference>
<dbReference type="SMR" id="Q57748"/>
<dbReference type="FunCoup" id="Q57748">
    <property type="interactions" value="2"/>
</dbReference>
<dbReference type="STRING" id="243232.MJ_0300"/>
<dbReference type="PaxDb" id="243232-MJ_0300"/>
<dbReference type="DNASU" id="1451155"/>
<dbReference type="EnsemblBacteria" id="AAB98287">
    <property type="protein sequence ID" value="AAB98287"/>
    <property type="gene ID" value="MJ_0300"/>
</dbReference>
<dbReference type="GeneID" id="1451155"/>
<dbReference type="KEGG" id="mja:MJ_0300"/>
<dbReference type="eggNOG" id="arCOG00224">
    <property type="taxonomic scope" value="Archaea"/>
</dbReference>
<dbReference type="HOGENOM" id="CLU_039613_6_1_2"/>
<dbReference type="InParanoid" id="Q57748"/>
<dbReference type="OrthoDB" id="144613at2157"/>
<dbReference type="PhylomeDB" id="Q57748"/>
<dbReference type="Proteomes" id="UP000000805">
    <property type="component" value="Chromosome"/>
</dbReference>
<dbReference type="GO" id="GO:0003700">
    <property type="term" value="F:DNA-binding transcription factor activity"/>
    <property type="evidence" value="ECO:0007669"/>
    <property type="project" value="InterPro"/>
</dbReference>
<dbReference type="GO" id="GO:0000976">
    <property type="term" value="F:transcription cis-regulatory region binding"/>
    <property type="evidence" value="ECO:0000318"/>
    <property type="project" value="GO_Central"/>
</dbReference>
<dbReference type="GO" id="GO:0006355">
    <property type="term" value="P:regulation of DNA-templated transcription"/>
    <property type="evidence" value="ECO:0000318"/>
    <property type="project" value="GO_Central"/>
</dbReference>
<dbReference type="FunFam" id="1.10.10.10:FF:000001">
    <property type="entry name" value="LysR family transcriptional regulator"/>
    <property type="match status" value="1"/>
</dbReference>
<dbReference type="Gene3D" id="3.40.190.290">
    <property type="match status" value="1"/>
</dbReference>
<dbReference type="Gene3D" id="1.10.10.10">
    <property type="entry name" value="Winged helix-like DNA-binding domain superfamily/Winged helix DNA-binding domain"/>
    <property type="match status" value="1"/>
</dbReference>
<dbReference type="InterPro" id="IPR047788">
    <property type="entry name" value="LysR-like_Sec_metab"/>
</dbReference>
<dbReference type="InterPro" id="IPR005119">
    <property type="entry name" value="LysR_subst-bd"/>
</dbReference>
<dbReference type="InterPro" id="IPR000847">
    <property type="entry name" value="Tscrpt_reg_HTH_LysR"/>
</dbReference>
<dbReference type="InterPro" id="IPR036388">
    <property type="entry name" value="WH-like_DNA-bd_sf"/>
</dbReference>
<dbReference type="InterPro" id="IPR036390">
    <property type="entry name" value="WH_DNA-bd_sf"/>
</dbReference>
<dbReference type="NCBIfam" id="NF040786">
    <property type="entry name" value="LysR_Sec_metab"/>
    <property type="match status" value="1"/>
</dbReference>
<dbReference type="PANTHER" id="PTHR30126">
    <property type="entry name" value="HTH-TYPE TRANSCRIPTIONAL REGULATOR"/>
    <property type="match status" value="1"/>
</dbReference>
<dbReference type="PANTHER" id="PTHR30126:SF40">
    <property type="entry name" value="HTH-TYPE TRANSCRIPTIONAL REGULATOR GLTR"/>
    <property type="match status" value="1"/>
</dbReference>
<dbReference type="Pfam" id="PF00126">
    <property type="entry name" value="HTH_1"/>
    <property type="match status" value="1"/>
</dbReference>
<dbReference type="Pfam" id="PF03466">
    <property type="entry name" value="LysR_substrate"/>
    <property type="match status" value="1"/>
</dbReference>
<dbReference type="PRINTS" id="PR00039">
    <property type="entry name" value="HTHLYSR"/>
</dbReference>
<dbReference type="SUPFAM" id="SSF53850">
    <property type="entry name" value="Periplasmic binding protein-like II"/>
    <property type="match status" value="1"/>
</dbReference>
<dbReference type="SUPFAM" id="SSF46785">
    <property type="entry name" value="Winged helix' DNA-binding domain"/>
    <property type="match status" value="1"/>
</dbReference>
<dbReference type="PROSITE" id="PS50931">
    <property type="entry name" value="HTH_LYSR"/>
    <property type="match status" value="1"/>
</dbReference>
<evidence type="ECO:0000255" key="1">
    <source>
        <dbReference type="PROSITE-ProRule" id="PRU00253"/>
    </source>
</evidence>
<evidence type="ECO:0000305" key="2"/>
<reference key="1">
    <citation type="journal article" date="1996" name="Science">
        <title>Complete genome sequence of the methanogenic archaeon, Methanococcus jannaschii.</title>
        <authorList>
            <person name="Bult C.J."/>
            <person name="White O."/>
            <person name="Olsen G.J."/>
            <person name="Zhou L."/>
            <person name="Fleischmann R.D."/>
            <person name="Sutton G.G."/>
            <person name="Blake J.A."/>
            <person name="FitzGerald L.M."/>
            <person name="Clayton R.A."/>
            <person name="Gocayne J.D."/>
            <person name="Kerlavage A.R."/>
            <person name="Dougherty B.A."/>
            <person name="Tomb J.-F."/>
            <person name="Adams M.D."/>
            <person name="Reich C.I."/>
            <person name="Overbeek R."/>
            <person name="Kirkness E.F."/>
            <person name="Weinstock K.G."/>
            <person name="Merrick J.M."/>
            <person name="Glodek A."/>
            <person name="Scott J.L."/>
            <person name="Geoghagen N.S.M."/>
            <person name="Weidman J.F."/>
            <person name="Fuhrmann J.L."/>
            <person name="Nguyen D."/>
            <person name="Utterback T.R."/>
            <person name="Kelley J.M."/>
            <person name="Peterson J.D."/>
            <person name="Sadow P.W."/>
            <person name="Hanna M.C."/>
            <person name="Cotton M.D."/>
            <person name="Roberts K.M."/>
            <person name="Hurst M.A."/>
            <person name="Kaine B.P."/>
            <person name="Borodovsky M."/>
            <person name="Klenk H.-P."/>
            <person name="Fraser C.M."/>
            <person name="Smith H.O."/>
            <person name="Woese C.R."/>
            <person name="Venter J.C."/>
        </authorList>
    </citation>
    <scope>NUCLEOTIDE SEQUENCE [LARGE SCALE GENOMIC DNA]</scope>
    <source>
        <strain>ATCC 43067 / DSM 2661 / JAL-1 / JCM 10045 / NBRC 100440</strain>
    </source>
</reference>
<keyword id="KW-0238">DNA-binding</keyword>
<keyword id="KW-1185">Reference proteome</keyword>
<keyword id="KW-0804">Transcription</keyword>
<keyword id="KW-0805">Transcription regulation</keyword>